<accession>Q1XDH0</accession>
<dbReference type="EMBL" id="AP006715">
    <property type="protein sequence ID" value="BAE92441.1"/>
    <property type="molecule type" value="Genomic_DNA"/>
</dbReference>
<dbReference type="RefSeq" id="YP_536998.1">
    <property type="nucleotide sequence ID" value="NC_007932.1"/>
</dbReference>
<dbReference type="SMR" id="Q1XDH0"/>
<dbReference type="GeneID" id="3978785"/>
<dbReference type="GO" id="GO:0009535">
    <property type="term" value="C:chloroplast thylakoid membrane"/>
    <property type="evidence" value="ECO:0007669"/>
    <property type="project" value="UniProtKB-SubCell"/>
</dbReference>
<dbReference type="GO" id="GO:0009539">
    <property type="term" value="C:photosystem II reaction center"/>
    <property type="evidence" value="ECO:0007669"/>
    <property type="project" value="InterPro"/>
</dbReference>
<dbReference type="GO" id="GO:0015979">
    <property type="term" value="P:photosynthesis"/>
    <property type="evidence" value="ECO:0007669"/>
    <property type="project" value="UniProtKB-UniRule"/>
</dbReference>
<dbReference type="HAMAP" id="MF_00441">
    <property type="entry name" value="PSII_PsbK"/>
    <property type="match status" value="1"/>
</dbReference>
<dbReference type="InterPro" id="IPR003687">
    <property type="entry name" value="PSII_PsbK"/>
</dbReference>
<dbReference type="InterPro" id="IPR037270">
    <property type="entry name" value="PSII_PsbK_sf"/>
</dbReference>
<dbReference type="NCBIfam" id="NF002715">
    <property type="entry name" value="PRK02553.1"/>
    <property type="match status" value="1"/>
</dbReference>
<dbReference type="PANTHER" id="PTHR35325">
    <property type="match status" value="1"/>
</dbReference>
<dbReference type="PANTHER" id="PTHR35325:SF1">
    <property type="entry name" value="PHOTOSYSTEM II REACTION CENTER PROTEIN K"/>
    <property type="match status" value="1"/>
</dbReference>
<dbReference type="Pfam" id="PF02533">
    <property type="entry name" value="PsbK"/>
    <property type="match status" value="1"/>
</dbReference>
<dbReference type="SUPFAM" id="SSF161037">
    <property type="entry name" value="Photosystem II reaction center protein K, PsbK"/>
    <property type="match status" value="1"/>
</dbReference>
<comment type="function">
    <text evidence="1">One of the components of the core complex of photosystem II (PSII). PSII is a light-driven water:plastoquinone oxidoreductase that uses light energy to abstract electrons from H(2)O, generating O(2) and a proton gradient subsequently used for ATP formation. It consists of a core antenna complex that captures photons, and an electron transfer chain that converts photonic excitation into a charge separation.</text>
</comment>
<comment type="subunit">
    <text evidence="1">PSII is composed of 1 copy each of membrane proteins PsbA, PsbB, PsbC, PsbD, PsbE, PsbF, PsbH, PsbI, PsbJ, PsbK, PsbL, PsbM, PsbT, PsbX, PsbY, PsbZ, Psb30/Ycf12, at least 3 peripheral proteins of the oxygen-evolving complex and a large number of cofactors. It forms dimeric complexes.</text>
</comment>
<comment type="subcellular location">
    <subcellularLocation>
        <location evidence="1">Plastid</location>
        <location evidence="1">Chloroplast thylakoid membrane</location>
        <topology evidence="1">Single-pass membrane protein</topology>
    </subcellularLocation>
</comment>
<comment type="similarity">
    <text evidence="1">Belongs to the PsbK family.</text>
</comment>
<feature type="propeptide" id="PRO_0000276194" evidence="1">
    <location>
        <begin position="1"/>
        <end position="8"/>
    </location>
</feature>
<feature type="chain" id="PRO_0000276195" description="Photosystem II reaction center protein K" evidence="1">
    <location>
        <begin position="9"/>
        <end position="45"/>
    </location>
</feature>
<feature type="transmembrane region" description="Helical" evidence="1">
    <location>
        <begin position="23"/>
        <end position="43"/>
    </location>
</feature>
<sequence length="45" mass="5079">MNSALFLAKLPEAYAIFKPIIDILPVIPVFFLLLAFVWQAAIGFR</sequence>
<proteinExistence type="inferred from homology"/>
<protein>
    <recommendedName>
        <fullName evidence="1">Photosystem II reaction center protein K</fullName>
        <shortName evidence="1">PSII-K</shortName>
    </recommendedName>
</protein>
<organism>
    <name type="scientific">Pyropia yezoensis</name>
    <name type="common">Susabi-nori</name>
    <name type="synonym">Porphyra yezoensis</name>
    <dbReference type="NCBI Taxonomy" id="2788"/>
    <lineage>
        <taxon>Eukaryota</taxon>
        <taxon>Rhodophyta</taxon>
        <taxon>Bangiophyceae</taxon>
        <taxon>Bangiales</taxon>
        <taxon>Bangiaceae</taxon>
        <taxon>Pyropia</taxon>
    </lineage>
</organism>
<name>PSBK_PYRYE</name>
<gene>
    <name evidence="1" type="primary">psbK</name>
</gene>
<evidence type="ECO:0000255" key="1">
    <source>
        <dbReference type="HAMAP-Rule" id="MF_00441"/>
    </source>
</evidence>
<geneLocation type="chloroplast"/>
<keyword id="KW-0150">Chloroplast</keyword>
<keyword id="KW-0472">Membrane</keyword>
<keyword id="KW-0602">Photosynthesis</keyword>
<keyword id="KW-0604">Photosystem II</keyword>
<keyword id="KW-0934">Plastid</keyword>
<keyword id="KW-0674">Reaction center</keyword>
<keyword id="KW-0793">Thylakoid</keyword>
<keyword id="KW-0812">Transmembrane</keyword>
<keyword id="KW-1133">Transmembrane helix</keyword>
<reference key="1">
    <citation type="submission" date="2003-11" db="EMBL/GenBank/DDBJ databases">
        <title>Whole genome sequence of Porphyra yezoensis chloroplast.</title>
        <authorList>
            <person name="Kunimoto M."/>
            <person name="Morishima K."/>
            <person name="Yoshikawa M."/>
            <person name="Fukuda S."/>
            <person name="Kobayashi T."/>
            <person name="Kobayashi M."/>
            <person name="Okazaki T."/>
            <person name="Ohara I."/>
            <person name="Nakayama I."/>
        </authorList>
    </citation>
    <scope>NUCLEOTIDE SEQUENCE [LARGE SCALE GENOMIC DNA]</scope>
    <source>
        <strain>U-51</strain>
    </source>
</reference>